<feature type="chain" id="PRO_1000086510" description="Large ribosomal subunit protein uL4">
    <location>
        <begin position="1"/>
        <end position="206"/>
    </location>
</feature>
<feature type="region of interest" description="Disordered" evidence="2">
    <location>
        <begin position="42"/>
        <end position="94"/>
    </location>
</feature>
<feature type="compositionally biased region" description="Basic residues" evidence="2">
    <location>
        <begin position="64"/>
        <end position="77"/>
    </location>
</feature>
<organism>
    <name type="scientific">Brucella suis (strain ATCC 23445 / NCTC 10510)</name>
    <dbReference type="NCBI Taxonomy" id="470137"/>
    <lineage>
        <taxon>Bacteria</taxon>
        <taxon>Pseudomonadati</taxon>
        <taxon>Pseudomonadota</taxon>
        <taxon>Alphaproteobacteria</taxon>
        <taxon>Hyphomicrobiales</taxon>
        <taxon>Brucellaceae</taxon>
        <taxon>Brucella/Ochrobactrum group</taxon>
        <taxon>Brucella</taxon>
    </lineage>
</organism>
<sequence length="206" mass="22561">MDLTITTLEGKDAGKVKLNEEIFGLDPRDDILQRVVRWQLARRQQGSHKAQGRGDVSRTGSKMYKQKGTGRARHHSARAPQFRGGGQAHGPVVRNHDHDLPKKVRALGLRHALSAKAKASDLIIIDDLASADAKTKQLVSQFAKLGLENALLIGGAEIDANFQRAASNIPNIDVLPVQGINVYDILRRGKLVLSKAAVEALEERFK</sequence>
<evidence type="ECO:0000255" key="1">
    <source>
        <dbReference type="HAMAP-Rule" id="MF_01328"/>
    </source>
</evidence>
<evidence type="ECO:0000256" key="2">
    <source>
        <dbReference type="SAM" id="MobiDB-lite"/>
    </source>
</evidence>
<evidence type="ECO:0000305" key="3"/>
<dbReference type="EMBL" id="CP000911">
    <property type="protein sequence ID" value="ABY38332.1"/>
    <property type="molecule type" value="Genomic_DNA"/>
</dbReference>
<dbReference type="RefSeq" id="WP_002964361.1">
    <property type="nucleotide sequence ID" value="NC_010169.1"/>
</dbReference>
<dbReference type="SMR" id="B0CH31"/>
<dbReference type="GeneID" id="93016440"/>
<dbReference type="KEGG" id="bmt:BSUIS_A1281"/>
<dbReference type="HOGENOM" id="CLU_041575_5_1_5"/>
<dbReference type="Proteomes" id="UP000008545">
    <property type="component" value="Chromosome I"/>
</dbReference>
<dbReference type="GO" id="GO:1990904">
    <property type="term" value="C:ribonucleoprotein complex"/>
    <property type="evidence" value="ECO:0007669"/>
    <property type="project" value="UniProtKB-KW"/>
</dbReference>
<dbReference type="GO" id="GO:0005840">
    <property type="term" value="C:ribosome"/>
    <property type="evidence" value="ECO:0007669"/>
    <property type="project" value="UniProtKB-KW"/>
</dbReference>
<dbReference type="GO" id="GO:0019843">
    <property type="term" value="F:rRNA binding"/>
    <property type="evidence" value="ECO:0007669"/>
    <property type="project" value="UniProtKB-UniRule"/>
</dbReference>
<dbReference type="GO" id="GO:0003735">
    <property type="term" value="F:structural constituent of ribosome"/>
    <property type="evidence" value="ECO:0007669"/>
    <property type="project" value="InterPro"/>
</dbReference>
<dbReference type="GO" id="GO:0006412">
    <property type="term" value="P:translation"/>
    <property type="evidence" value="ECO:0007669"/>
    <property type="project" value="UniProtKB-UniRule"/>
</dbReference>
<dbReference type="Gene3D" id="3.40.1370.10">
    <property type="match status" value="1"/>
</dbReference>
<dbReference type="HAMAP" id="MF_01328_B">
    <property type="entry name" value="Ribosomal_uL4_B"/>
    <property type="match status" value="1"/>
</dbReference>
<dbReference type="InterPro" id="IPR002136">
    <property type="entry name" value="Ribosomal_uL4"/>
</dbReference>
<dbReference type="InterPro" id="IPR013005">
    <property type="entry name" value="Ribosomal_uL4-like"/>
</dbReference>
<dbReference type="InterPro" id="IPR023574">
    <property type="entry name" value="Ribosomal_uL4_dom_sf"/>
</dbReference>
<dbReference type="NCBIfam" id="TIGR03953">
    <property type="entry name" value="rplD_bact"/>
    <property type="match status" value="1"/>
</dbReference>
<dbReference type="PANTHER" id="PTHR10746">
    <property type="entry name" value="50S RIBOSOMAL PROTEIN L4"/>
    <property type="match status" value="1"/>
</dbReference>
<dbReference type="PANTHER" id="PTHR10746:SF6">
    <property type="entry name" value="LARGE RIBOSOMAL SUBUNIT PROTEIN UL4M"/>
    <property type="match status" value="1"/>
</dbReference>
<dbReference type="Pfam" id="PF00573">
    <property type="entry name" value="Ribosomal_L4"/>
    <property type="match status" value="1"/>
</dbReference>
<dbReference type="SUPFAM" id="SSF52166">
    <property type="entry name" value="Ribosomal protein L4"/>
    <property type="match status" value="1"/>
</dbReference>
<reference key="1">
    <citation type="submission" date="2007-12" db="EMBL/GenBank/DDBJ databases">
        <title>Brucella suis ATCC 23445 whole genome shotgun sequencing project.</title>
        <authorList>
            <person name="Setubal J.C."/>
            <person name="Bowns C."/>
            <person name="Boyle S."/>
            <person name="Crasta O.R."/>
            <person name="Czar M.J."/>
            <person name="Dharmanolla C."/>
            <person name="Gillespie J.J."/>
            <person name="Kenyon R.W."/>
            <person name="Lu J."/>
            <person name="Mane S."/>
            <person name="Mohapatra S."/>
            <person name="Nagrani S."/>
            <person name="Purkayastha A."/>
            <person name="Rajasimha H.K."/>
            <person name="Shallom J.M."/>
            <person name="Shallom S."/>
            <person name="Shukla M."/>
            <person name="Snyder E.E."/>
            <person name="Sobral B.W."/>
            <person name="Wattam A.R."/>
            <person name="Will R."/>
            <person name="Williams K."/>
            <person name="Yoo H."/>
            <person name="Bruce D."/>
            <person name="Detter C."/>
            <person name="Munk C."/>
            <person name="Brettin T.S."/>
        </authorList>
    </citation>
    <scope>NUCLEOTIDE SEQUENCE [LARGE SCALE GENOMIC DNA]</scope>
    <source>
        <strain>ATCC 23445 / NCTC 10510</strain>
    </source>
</reference>
<accession>B0CH31</accession>
<protein>
    <recommendedName>
        <fullName evidence="1">Large ribosomal subunit protein uL4</fullName>
    </recommendedName>
    <alternativeName>
        <fullName evidence="3">50S ribosomal protein L4</fullName>
    </alternativeName>
</protein>
<name>RL4_BRUSI</name>
<proteinExistence type="inferred from homology"/>
<gene>
    <name evidence="1" type="primary">rplD</name>
    <name type="ordered locus">BSUIS_A1281</name>
</gene>
<keyword id="KW-0687">Ribonucleoprotein</keyword>
<keyword id="KW-0689">Ribosomal protein</keyword>
<keyword id="KW-0694">RNA-binding</keyword>
<keyword id="KW-0699">rRNA-binding</keyword>
<comment type="function">
    <text evidence="1">One of the primary rRNA binding proteins, this protein initially binds near the 5'-end of the 23S rRNA. It is important during the early stages of 50S assembly. It makes multiple contacts with different domains of the 23S rRNA in the assembled 50S subunit and ribosome.</text>
</comment>
<comment type="function">
    <text evidence="1">Forms part of the polypeptide exit tunnel.</text>
</comment>
<comment type="subunit">
    <text evidence="1">Part of the 50S ribosomal subunit.</text>
</comment>
<comment type="similarity">
    <text evidence="1">Belongs to the universal ribosomal protein uL4 family.</text>
</comment>